<accession>Q9HV35</accession>
<evidence type="ECO:0000255" key="1">
    <source>
        <dbReference type="HAMAP-Rule" id="MF_00464"/>
    </source>
</evidence>
<reference key="1">
    <citation type="journal article" date="2000" name="Nature">
        <title>Complete genome sequence of Pseudomonas aeruginosa PAO1, an opportunistic pathogen.</title>
        <authorList>
            <person name="Stover C.K."/>
            <person name="Pham X.-Q.T."/>
            <person name="Erwin A.L."/>
            <person name="Mizoguchi S.D."/>
            <person name="Warrener P."/>
            <person name="Hickey M.J."/>
            <person name="Brinkman F.S.L."/>
            <person name="Hufnagle W.O."/>
            <person name="Kowalik D.J."/>
            <person name="Lagrou M."/>
            <person name="Garber R.L."/>
            <person name="Goltry L."/>
            <person name="Tolentino E."/>
            <person name="Westbrock-Wadman S."/>
            <person name="Yuan Y."/>
            <person name="Brody L.L."/>
            <person name="Coulter S.N."/>
            <person name="Folger K.R."/>
            <person name="Kas A."/>
            <person name="Larbig K."/>
            <person name="Lim R.M."/>
            <person name="Smith K.A."/>
            <person name="Spencer D.H."/>
            <person name="Wong G.K.-S."/>
            <person name="Wu Z."/>
            <person name="Paulsen I.T."/>
            <person name="Reizer J."/>
            <person name="Saier M.H. Jr."/>
            <person name="Hancock R.E.W."/>
            <person name="Lory S."/>
            <person name="Olson M.V."/>
        </authorList>
    </citation>
    <scope>NUCLEOTIDE SEQUENCE [LARGE SCALE GENOMIC DNA]</scope>
    <source>
        <strain>ATCC 15692 / DSM 22644 / CIP 104116 / JCM 14847 / LMG 12228 / 1C / PRS 101 / PAO1</strain>
    </source>
</reference>
<sequence>MAIQPLRLDPITVLGKQLVIELFDCVDQRFDDIQWIEESMLEAARQANATIITSAFHKFSPIGISGVVVIAESHLAIHTWPEYGYAAVDVFTCGDVLDGAQAVRVLSERLGSRRHLISSMDRGLGGHRLGLLSRSLAGNGPVDEDSPTLRWALGQGTGVA</sequence>
<proteinExistence type="inferred from homology"/>
<name>SPEH_PSEAE</name>
<keyword id="KW-0068">Autocatalytic cleavage</keyword>
<keyword id="KW-0210">Decarboxylase</keyword>
<keyword id="KW-0456">Lyase</keyword>
<keyword id="KW-0620">Polyamine biosynthesis</keyword>
<keyword id="KW-0670">Pyruvate</keyword>
<keyword id="KW-1185">Reference proteome</keyword>
<keyword id="KW-0949">S-adenosyl-L-methionine</keyword>
<keyword id="KW-0704">Schiff base</keyword>
<keyword id="KW-0745">Spermidine biosynthesis</keyword>
<keyword id="KW-0865">Zymogen</keyword>
<feature type="chain" id="PRO_0000030119" description="S-adenosylmethionine decarboxylase beta chain" evidence="1">
    <location>
        <begin position="1"/>
        <end position="72"/>
    </location>
</feature>
<feature type="chain" id="PRO_0000030120" description="S-adenosylmethionine decarboxylase alpha chain" evidence="1">
    <location>
        <begin position="73"/>
        <end position="160"/>
    </location>
</feature>
<feature type="active site" description="Schiff-base intermediate with substrate; via pyruvic acid" evidence="1">
    <location>
        <position position="73"/>
    </location>
</feature>
<feature type="active site" description="Proton acceptor; for processing activity" evidence="1">
    <location>
        <position position="78"/>
    </location>
</feature>
<feature type="active site" description="Proton donor; for catalytic activity" evidence="1">
    <location>
        <position position="93"/>
    </location>
</feature>
<feature type="site" description="Cleavage (non-hydrolytic); by autolysis" evidence="1">
    <location>
        <begin position="72"/>
        <end position="73"/>
    </location>
</feature>
<feature type="modified residue" description="Pyruvic acid (Ser); by autocatalysis" evidence="1">
    <location>
        <position position="73"/>
    </location>
</feature>
<gene>
    <name evidence="1" type="primary">speH</name>
    <name type="ordered locus">PA4773</name>
</gene>
<organism>
    <name type="scientific">Pseudomonas aeruginosa (strain ATCC 15692 / DSM 22644 / CIP 104116 / JCM 14847 / LMG 12228 / 1C / PRS 101 / PAO1)</name>
    <dbReference type="NCBI Taxonomy" id="208964"/>
    <lineage>
        <taxon>Bacteria</taxon>
        <taxon>Pseudomonadati</taxon>
        <taxon>Pseudomonadota</taxon>
        <taxon>Gammaproteobacteria</taxon>
        <taxon>Pseudomonadales</taxon>
        <taxon>Pseudomonadaceae</taxon>
        <taxon>Pseudomonas</taxon>
    </lineage>
</organism>
<comment type="function">
    <text evidence="1">Catalyzes the decarboxylation of S-adenosylmethionine to S-adenosylmethioninamine (dcAdoMet), the propylamine donor required for the synthesis of the polyamines spermine and spermidine from the diamine putrescine.</text>
</comment>
<comment type="catalytic activity">
    <reaction evidence="1">
        <text>S-adenosyl-L-methionine + H(+) = S-adenosyl 3-(methylsulfanyl)propylamine + CO2</text>
        <dbReference type="Rhea" id="RHEA:15981"/>
        <dbReference type="ChEBI" id="CHEBI:15378"/>
        <dbReference type="ChEBI" id="CHEBI:16526"/>
        <dbReference type="ChEBI" id="CHEBI:57443"/>
        <dbReference type="ChEBI" id="CHEBI:59789"/>
        <dbReference type="EC" id="4.1.1.50"/>
    </reaction>
</comment>
<comment type="cofactor">
    <cofactor evidence="1">
        <name>pyruvate</name>
        <dbReference type="ChEBI" id="CHEBI:15361"/>
    </cofactor>
    <text evidence="1">Binds 1 pyruvoyl group covalently per subunit.</text>
</comment>
<comment type="pathway">
    <text evidence="1">Amine and polyamine biosynthesis; S-adenosylmethioninamine biosynthesis; S-adenosylmethioninamine from S-adenosyl-L-methionine: step 1/1.</text>
</comment>
<comment type="subunit">
    <text evidence="1">Heterotetramer of two alpha and two beta chains arranged as a dimer of alpha/beta heterodimers.</text>
</comment>
<comment type="PTM">
    <text evidence="1">Is synthesized initially as an inactive proenzyme. Formation of the active enzyme involves a self-maturation process in which the active site pyruvoyl group is generated from an internal serine residue via an autocatalytic post-translational modification. Two non-identical subunits are generated from the proenzyme in this reaction, and the pyruvate is formed at the N-terminus of the alpha chain, which is derived from the carboxyl end of the proenzyme. The post-translation cleavage follows an unusual pathway, termed non-hydrolytic serinolysis, in which the side chain hydroxyl group of the serine supplies its oxygen atom to form the C-terminus of the beta chain, while the remainder of the serine residue undergoes an oxidative deamination to produce ammonia and the pyruvoyl group blocking the N-terminus of the alpha chain.</text>
</comment>
<comment type="similarity">
    <text evidence="1">Belongs to the prokaryotic AdoMetDC family. Type 1 subfamily.</text>
</comment>
<dbReference type="EC" id="4.1.1.50" evidence="1"/>
<dbReference type="EMBL" id="AE004091">
    <property type="protein sequence ID" value="AAG08159.1"/>
    <property type="molecule type" value="Genomic_DNA"/>
</dbReference>
<dbReference type="PIR" id="C83048">
    <property type="entry name" value="C83048"/>
</dbReference>
<dbReference type="RefSeq" id="NP_253461.1">
    <property type="nucleotide sequence ID" value="NC_002516.2"/>
</dbReference>
<dbReference type="SMR" id="Q9HV35"/>
<dbReference type="STRING" id="208964.PA4773"/>
<dbReference type="PaxDb" id="208964-PA4773"/>
<dbReference type="DNASU" id="881823"/>
<dbReference type="GeneID" id="881823"/>
<dbReference type="KEGG" id="pae:PA4773"/>
<dbReference type="PATRIC" id="fig|208964.12.peg.5000"/>
<dbReference type="PseudoCAP" id="PA4773"/>
<dbReference type="HOGENOM" id="CLU_125470_2_3_6"/>
<dbReference type="InParanoid" id="Q9HV35"/>
<dbReference type="OrthoDB" id="278697at2"/>
<dbReference type="PhylomeDB" id="Q9HV35"/>
<dbReference type="BioCyc" id="PAER208964:G1FZ6-4886-MONOMER"/>
<dbReference type="UniPathway" id="UPA00331">
    <property type="reaction ID" value="UER00451"/>
</dbReference>
<dbReference type="Proteomes" id="UP000002438">
    <property type="component" value="Chromosome"/>
</dbReference>
<dbReference type="GO" id="GO:0005829">
    <property type="term" value="C:cytosol"/>
    <property type="evidence" value="ECO:0000318"/>
    <property type="project" value="GO_Central"/>
</dbReference>
<dbReference type="GO" id="GO:0004014">
    <property type="term" value="F:adenosylmethionine decarboxylase activity"/>
    <property type="evidence" value="ECO:0000315"/>
    <property type="project" value="PseudoCAP"/>
</dbReference>
<dbReference type="GO" id="GO:0008295">
    <property type="term" value="P:spermidine biosynthetic process"/>
    <property type="evidence" value="ECO:0000318"/>
    <property type="project" value="GO_Central"/>
</dbReference>
<dbReference type="FunFam" id="3.60.90.10:FF:000013">
    <property type="entry name" value="S-adenosylmethionine decarboxylase proenzyme"/>
    <property type="match status" value="1"/>
</dbReference>
<dbReference type="Gene3D" id="3.60.90.10">
    <property type="entry name" value="S-adenosylmethionine decarboxylase"/>
    <property type="match status" value="1"/>
</dbReference>
<dbReference type="HAMAP" id="MF_00464">
    <property type="entry name" value="AdoMetDC_1"/>
    <property type="match status" value="1"/>
</dbReference>
<dbReference type="InterPro" id="IPR003826">
    <property type="entry name" value="AdoMetDC_fam_prok"/>
</dbReference>
<dbReference type="InterPro" id="IPR016067">
    <property type="entry name" value="S-AdoMet_deCO2ase_core"/>
</dbReference>
<dbReference type="InterPro" id="IPR017716">
    <property type="entry name" value="S-AdoMet_deCOase_pro-enz"/>
</dbReference>
<dbReference type="NCBIfam" id="TIGR03330">
    <property type="entry name" value="SAM_DCase_Bsu"/>
    <property type="match status" value="1"/>
</dbReference>
<dbReference type="PANTHER" id="PTHR33866">
    <property type="entry name" value="S-ADENOSYLMETHIONINE DECARBOXYLASE PROENZYME"/>
    <property type="match status" value="1"/>
</dbReference>
<dbReference type="PANTHER" id="PTHR33866:SF2">
    <property type="entry name" value="S-ADENOSYLMETHIONINE DECARBOXYLASE PROENZYME"/>
    <property type="match status" value="1"/>
</dbReference>
<dbReference type="Pfam" id="PF02675">
    <property type="entry name" value="AdoMet_dc"/>
    <property type="match status" value="1"/>
</dbReference>
<dbReference type="SUPFAM" id="SSF56276">
    <property type="entry name" value="S-adenosylmethionine decarboxylase"/>
    <property type="match status" value="1"/>
</dbReference>
<protein>
    <recommendedName>
        <fullName evidence="1">S-adenosylmethionine decarboxylase proenzyme</fullName>
        <shortName evidence="1">AdoMetDC</shortName>
        <shortName evidence="1">SAMDC</shortName>
        <ecNumber evidence="1">4.1.1.50</ecNumber>
    </recommendedName>
    <component>
        <recommendedName>
            <fullName evidence="1">S-adenosylmethionine decarboxylase beta chain</fullName>
        </recommendedName>
    </component>
    <component>
        <recommendedName>
            <fullName evidence="1">S-adenosylmethionine decarboxylase alpha chain</fullName>
        </recommendedName>
    </component>
</protein>